<protein>
    <recommendedName>
        <fullName evidence="1">o-succinylbenzoate synthase</fullName>
        <shortName evidence="1">OSB synthase</shortName>
        <shortName evidence="1">OSBS</shortName>
        <ecNumber evidence="1">4.2.1.113</ecNumber>
    </recommendedName>
    <alternativeName>
        <fullName evidence="1">4-(2'-carboxyphenyl)-4-oxybutyric acid synthase</fullName>
    </alternativeName>
    <alternativeName>
        <fullName evidence="1">o-succinylbenzoic acid synthase</fullName>
    </alternativeName>
</protein>
<feature type="chain" id="PRO_1000013816" description="o-succinylbenzoate synthase">
    <location>
        <begin position="1"/>
        <end position="323"/>
    </location>
</feature>
<feature type="active site" description="Proton donor" evidence="1">
    <location>
        <position position="134"/>
    </location>
</feature>
<feature type="active site" description="Proton acceptor" evidence="1">
    <location>
        <position position="236"/>
    </location>
</feature>
<feature type="binding site" evidence="1">
    <location>
        <position position="162"/>
    </location>
    <ligand>
        <name>Mg(2+)</name>
        <dbReference type="ChEBI" id="CHEBI:18420"/>
    </ligand>
</feature>
<feature type="binding site" evidence="1">
    <location>
        <position position="191"/>
    </location>
    <ligand>
        <name>Mg(2+)</name>
        <dbReference type="ChEBI" id="CHEBI:18420"/>
    </ligand>
</feature>
<feature type="binding site" evidence="1">
    <location>
        <position position="214"/>
    </location>
    <ligand>
        <name>Mg(2+)</name>
        <dbReference type="ChEBI" id="CHEBI:18420"/>
    </ligand>
</feature>
<keyword id="KW-0456">Lyase</keyword>
<keyword id="KW-0460">Magnesium</keyword>
<keyword id="KW-0474">Menaquinone biosynthesis</keyword>
<keyword id="KW-0479">Metal-binding</keyword>
<comment type="function">
    <text evidence="1">Converts 2-succinyl-6-hydroxy-2,4-cyclohexadiene-1-carboxylate (SHCHC) to 2-succinylbenzoate (OSB).</text>
</comment>
<comment type="catalytic activity">
    <reaction evidence="1">
        <text>(1R,6R)-6-hydroxy-2-succinyl-cyclohexa-2,4-diene-1-carboxylate = 2-succinylbenzoate + H2O</text>
        <dbReference type="Rhea" id="RHEA:10196"/>
        <dbReference type="ChEBI" id="CHEBI:15377"/>
        <dbReference type="ChEBI" id="CHEBI:18325"/>
        <dbReference type="ChEBI" id="CHEBI:58689"/>
        <dbReference type="EC" id="4.2.1.113"/>
    </reaction>
</comment>
<comment type="cofactor">
    <cofactor evidence="1">
        <name>a divalent metal cation</name>
        <dbReference type="ChEBI" id="CHEBI:60240"/>
    </cofactor>
</comment>
<comment type="pathway">
    <text evidence="1">Quinol/quinone metabolism; 1,4-dihydroxy-2-naphthoate biosynthesis; 1,4-dihydroxy-2-naphthoate from chorismate: step 4/7.</text>
</comment>
<comment type="pathway">
    <text evidence="1">Quinol/quinone metabolism; menaquinone biosynthesis.</text>
</comment>
<comment type="similarity">
    <text evidence="1">Belongs to the mandelate racemase/muconate lactonizing enzyme family. MenC type 1 subfamily.</text>
</comment>
<evidence type="ECO:0000255" key="1">
    <source>
        <dbReference type="HAMAP-Rule" id="MF_00470"/>
    </source>
</evidence>
<sequence length="323" mass="35365">MRAATLYRYSIPMEAGVILRHQRLKSRDGLLVKLQQGEQTGWGEIAPLPEFSQETLPEAQAAAIAELQRWVNGEELDLGPLPSVAFGLSCALAELEKLLPLSADYHKAPLCTGDPDELFAVLQALPGEKVAKVKVGLYEAVRDGMIVNVLLEALPDLKLRLDANRSWTRAKADGFAKYVNPELRSRIAFLEEPCKTRAESREFARDTGIAIAWDESVREADFQVEAEPGVAAIVIKPTLVGSIARCQQLVQQAHQAGLEAVISSSIESSLGLTQLARLADWLTPATVPGLDTLSLMQAQCIRQWPDSTLPVVTVDQLDVLWHS</sequence>
<accession>A1JKU9</accession>
<reference key="1">
    <citation type="journal article" date="2006" name="PLoS Genet.">
        <title>The complete genome sequence and comparative genome analysis of the high pathogenicity Yersinia enterocolitica strain 8081.</title>
        <authorList>
            <person name="Thomson N.R."/>
            <person name="Howard S."/>
            <person name="Wren B.W."/>
            <person name="Holden M.T.G."/>
            <person name="Crossman L."/>
            <person name="Challis G.L."/>
            <person name="Churcher C."/>
            <person name="Mungall K."/>
            <person name="Brooks K."/>
            <person name="Chillingworth T."/>
            <person name="Feltwell T."/>
            <person name="Abdellah Z."/>
            <person name="Hauser H."/>
            <person name="Jagels K."/>
            <person name="Maddison M."/>
            <person name="Moule S."/>
            <person name="Sanders M."/>
            <person name="Whitehead S."/>
            <person name="Quail M.A."/>
            <person name="Dougan G."/>
            <person name="Parkhill J."/>
            <person name="Prentice M.B."/>
        </authorList>
    </citation>
    <scope>NUCLEOTIDE SEQUENCE [LARGE SCALE GENOMIC DNA]</scope>
    <source>
        <strain>NCTC 13174 / 8081</strain>
    </source>
</reference>
<gene>
    <name evidence="1" type="primary">menC</name>
    <name type="ordered locus">YE1378</name>
</gene>
<organism>
    <name type="scientific">Yersinia enterocolitica serotype O:8 / biotype 1B (strain NCTC 13174 / 8081)</name>
    <dbReference type="NCBI Taxonomy" id="393305"/>
    <lineage>
        <taxon>Bacteria</taxon>
        <taxon>Pseudomonadati</taxon>
        <taxon>Pseudomonadota</taxon>
        <taxon>Gammaproteobacteria</taxon>
        <taxon>Enterobacterales</taxon>
        <taxon>Yersiniaceae</taxon>
        <taxon>Yersinia</taxon>
    </lineage>
</organism>
<proteinExistence type="inferred from homology"/>
<name>MENC_YERE8</name>
<dbReference type="EC" id="4.2.1.113" evidence="1"/>
<dbReference type="EMBL" id="AM286415">
    <property type="protein sequence ID" value="CAL11471.1"/>
    <property type="molecule type" value="Genomic_DNA"/>
</dbReference>
<dbReference type="RefSeq" id="WP_011815961.1">
    <property type="nucleotide sequence ID" value="NC_008800.1"/>
</dbReference>
<dbReference type="RefSeq" id="YP_001005693.1">
    <property type="nucleotide sequence ID" value="NC_008800.1"/>
</dbReference>
<dbReference type="SMR" id="A1JKU9"/>
<dbReference type="KEGG" id="yen:YE1378"/>
<dbReference type="PATRIC" id="fig|393305.7.peg.1498"/>
<dbReference type="eggNOG" id="COG1441">
    <property type="taxonomic scope" value="Bacteria"/>
</dbReference>
<dbReference type="HOGENOM" id="CLU_030273_0_1_6"/>
<dbReference type="OrthoDB" id="3725747at2"/>
<dbReference type="UniPathway" id="UPA00079"/>
<dbReference type="UniPathway" id="UPA01057">
    <property type="reaction ID" value="UER00165"/>
</dbReference>
<dbReference type="Proteomes" id="UP000000642">
    <property type="component" value="Chromosome"/>
</dbReference>
<dbReference type="GO" id="GO:0000287">
    <property type="term" value="F:magnesium ion binding"/>
    <property type="evidence" value="ECO:0007669"/>
    <property type="project" value="UniProtKB-UniRule"/>
</dbReference>
<dbReference type="GO" id="GO:0043748">
    <property type="term" value="F:O-succinylbenzoate synthase activity"/>
    <property type="evidence" value="ECO:0007669"/>
    <property type="project" value="UniProtKB-EC"/>
</dbReference>
<dbReference type="GO" id="GO:0009234">
    <property type="term" value="P:menaquinone biosynthetic process"/>
    <property type="evidence" value="ECO:0007669"/>
    <property type="project" value="UniProtKB-UniRule"/>
</dbReference>
<dbReference type="CDD" id="cd03320">
    <property type="entry name" value="OSBS"/>
    <property type="match status" value="1"/>
</dbReference>
<dbReference type="Gene3D" id="3.20.20.120">
    <property type="entry name" value="Enolase-like C-terminal domain"/>
    <property type="match status" value="1"/>
</dbReference>
<dbReference type="Gene3D" id="3.30.390.10">
    <property type="entry name" value="Enolase-like, N-terminal domain"/>
    <property type="match status" value="1"/>
</dbReference>
<dbReference type="HAMAP" id="MF_00470">
    <property type="entry name" value="MenC_1"/>
    <property type="match status" value="1"/>
</dbReference>
<dbReference type="InterPro" id="IPR036849">
    <property type="entry name" value="Enolase-like_C_sf"/>
</dbReference>
<dbReference type="InterPro" id="IPR029017">
    <property type="entry name" value="Enolase-like_N"/>
</dbReference>
<dbReference type="InterPro" id="IPR029065">
    <property type="entry name" value="Enolase_C-like"/>
</dbReference>
<dbReference type="InterPro" id="IPR013342">
    <property type="entry name" value="Mandelate_racemase_C"/>
</dbReference>
<dbReference type="InterPro" id="IPR010196">
    <property type="entry name" value="OSB_synthase_MenC1"/>
</dbReference>
<dbReference type="InterPro" id="IPR041338">
    <property type="entry name" value="OSBS_N"/>
</dbReference>
<dbReference type="NCBIfam" id="TIGR01927">
    <property type="entry name" value="menC_gam_Gplu"/>
    <property type="match status" value="1"/>
</dbReference>
<dbReference type="NCBIfam" id="NF003473">
    <property type="entry name" value="PRK05105.1"/>
    <property type="match status" value="1"/>
</dbReference>
<dbReference type="PANTHER" id="PTHR48073:SF2">
    <property type="entry name" value="O-SUCCINYLBENZOATE SYNTHASE"/>
    <property type="match status" value="1"/>
</dbReference>
<dbReference type="PANTHER" id="PTHR48073">
    <property type="entry name" value="O-SUCCINYLBENZOATE SYNTHASE-RELATED"/>
    <property type="match status" value="1"/>
</dbReference>
<dbReference type="Pfam" id="PF21508">
    <property type="entry name" value="MenC_N"/>
    <property type="match status" value="1"/>
</dbReference>
<dbReference type="Pfam" id="PF13378">
    <property type="entry name" value="MR_MLE_C"/>
    <property type="match status" value="1"/>
</dbReference>
<dbReference type="SFLD" id="SFLDS00001">
    <property type="entry name" value="Enolase"/>
    <property type="match status" value="1"/>
</dbReference>
<dbReference type="SFLD" id="SFLDF00009">
    <property type="entry name" value="o-succinylbenzoate_synthase"/>
    <property type="match status" value="1"/>
</dbReference>
<dbReference type="SMART" id="SM00922">
    <property type="entry name" value="MR_MLE"/>
    <property type="match status" value="1"/>
</dbReference>
<dbReference type="SUPFAM" id="SSF51604">
    <property type="entry name" value="Enolase C-terminal domain-like"/>
    <property type="match status" value="1"/>
</dbReference>
<dbReference type="SUPFAM" id="SSF54826">
    <property type="entry name" value="Enolase N-terminal domain-like"/>
    <property type="match status" value="1"/>
</dbReference>